<protein>
    <recommendedName>
        <fullName evidence="12">Cell cycle control protein 50A</fullName>
    </recommendedName>
    <alternativeName>
        <fullName>P4-ATPase flippase complex beta subunit TMEM30A</fullName>
    </alternativeName>
    <alternativeName>
        <fullName>Transmembrane protein 30A</fullName>
    </alternativeName>
</protein>
<evidence type="ECO:0000250" key="1"/>
<evidence type="ECO:0000250" key="2">
    <source>
        <dbReference type="UniProtKB" id="Q9NV96"/>
    </source>
</evidence>
<evidence type="ECO:0000255" key="3"/>
<evidence type="ECO:0000256" key="4">
    <source>
        <dbReference type="SAM" id="MobiDB-lite"/>
    </source>
</evidence>
<evidence type="ECO:0000269" key="5">
    <source>
    </source>
</evidence>
<evidence type="ECO:0000269" key="6">
    <source>
    </source>
</evidence>
<evidence type="ECO:0000269" key="7">
    <source>
    </source>
</evidence>
<evidence type="ECO:0000269" key="8">
    <source>
    </source>
</evidence>
<evidence type="ECO:0000269" key="9">
    <source>
    </source>
</evidence>
<evidence type="ECO:0000269" key="10">
    <source>
    </source>
</evidence>
<evidence type="ECO:0000269" key="11">
    <source>
    </source>
</evidence>
<evidence type="ECO:0000305" key="12"/>
<evidence type="ECO:0000312" key="13">
    <source>
        <dbReference type="MGI" id="MGI:106402"/>
    </source>
</evidence>
<evidence type="ECO:0007744" key="14">
    <source>
    </source>
</evidence>
<dbReference type="EMBL" id="AK077065">
    <property type="protein sequence ID" value="BAC36588.1"/>
    <property type="molecule type" value="mRNA"/>
</dbReference>
<dbReference type="EMBL" id="AK150071">
    <property type="protein sequence ID" value="BAE29283.1"/>
    <property type="molecule type" value="mRNA"/>
</dbReference>
<dbReference type="EMBL" id="AK159364">
    <property type="protein sequence ID" value="BAE35022.1"/>
    <property type="molecule type" value="mRNA"/>
</dbReference>
<dbReference type="EMBL" id="AK170697">
    <property type="protein sequence ID" value="BAE41961.1"/>
    <property type="status" value="ALT_FRAME"/>
    <property type="molecule type" value="mRNA"/>
</dbReference>
<dbReference type="EMBL" id="AK170171">
    <property type="protein sequence ID" value="BAE41615.1"/>
    <property type="molecule type" value="mRNA"/>
</dbReference>
<dbReference type="EMBL" id="BC018367">
    <property type="protein sequence ID" value="AAH18367.1"/>
    <property type="molecule type" value="mRNA"/>
</dbReference>
<dbReference type="EMBL" id="BC018491">
    <property type="protein sequence ID" value="AAH18491.1"/>
    <property type="molecule type" value="mRNA"/>
</dbReference>
<dbReference type="EMBL" id="BC026136">
    <property type="protein sequence ID" value="AAH26136.1"/>
    <property type="status" value="ALT_INIT"/>
    <property type="molecule type" value="mRNA"/>
</dbReference>
<dbReference type="CCDS" id="CCDS23367.1"/>
<dbReference type="RefSeq" id="NP_598479.1">
    <property type="nucleotide sequence ID" value="NM_133718.4"/>
</dbReference>
<dbReference type="SMR" id="Q8VEK0"/>
<dbReference type="BioGRID" id="213794">
    <property type="interactions" value="2"/>
</dbReference>
<dbReference type="FunCoup" id="Q8VEK0">
    <property type="interactions" value="2855"/>
</dbReference>
<dbReference type="IntAct" id="Q8VEK0">
    <property type="interactions" value="2"/>
</dbReference>
<dbReference type="STRING" id="10090.ENSMUSP00000034878"/>
<dbReference type="GlyConnect" id="2201">
    <property type="glycosylation" value="10 N-Linked glycans (1 site)"/>
</dbReference>
<dbReference type="GlyCosmos" id="Q8VEK0">
    <property type="glycosylation" value="2 sites, 10 glycans"/>
</dbReference>
<dbReference type="GlyGen" id="Q8VEK0">
    <property type="glycosylation" value="7 sites, 16 N-linked glycans (6 sites), 1 O-linked glycan (1 site)"/>
</dbReference>
<dbReference type="iPTMnet" id="Q8VEK0"/>
<dbReference type="PhosphoSitePlus" id="Q8VEK0"/>
<dbReference type="SwissPalm" id="Q8VEK0"/>
<dbReference type="jPOST" id="Q8VEK0"/>
<dbReference type="PaxDb" id="10090-ENSMUSP00000034878"/>
<dbReference type="PeptideAtlas" id="Q8VEK0"/>
<dbReference type="ProteomicsDB" id="283720"/>
<dbReference type="Pumba" id="Q8VEK0"/>
<dbReference type="Antibodypedia" id="31507">
    <property type="antibodies" value="61 antibodies from 23 providers"/>
</dbReference>
<dbReference type="DNASU" id="69981"/>
<dbReference type="Ensembl" id="ENSMUST00000034878.12">
    <property type="protein sequence ID" value="ENSMUSP00000034878.6"/>
    <property type="gene ID" value="ENSMUSG00000032328.13"/>
</dbReference>
<dbReference type="GeneID" id="69981"/>
<dbReference type="KEGG" id="mmu:69981"/>
<dbReference type="UCSC" id="uc009quw.2">
    <property type="organism name" value="mouse"/>
</dbReference>
<dbReference type="AGR" id="MGI:106402"/>
<dbReference type="CTD" id="55754"/>
<dbReference type="MGI" id="MGI:106402">
    <property type="gene designation" value="Tmem30a"/>
</dbReference>
<dbReference type="VEuPathDB" id="HostDB:ENSMUSG00000032328"/>
<dbReference type="eggNOG" id="KOG2952">
    <property type="taxonomic scope" value="Eukaryota"/>
</dbReference>
<dbReference type="GeneTree" id="ENSGT00390000004660"/>
<dbReference type="InParanoid" id="Q8VEK0"/>
<dbReference type="OMA" id="IPWSMFN"/>
<dbReference type="OrthoDB" id="340608at2759"/>
<dbReference type="PhylomeDB" id="Q8VEK0"/>
<dbReference type="TreeFam" id="TF300873"/>
<dbReference type="Reactome" id="R-MMU-6798695">
    <property type="pathway name" value="Neutrophil degranulation"/>
</dbReference>
<dbReference type="SABIO-RK" id="Q8VEK0"/>
<dbReference type="BioGRID-ORCS" id="69981">
    <property type="hits" value="10 hits in 77 CRISPR screens"/>
</dbReference>
<dbReference type="CD-CODE" id="CE726F99">
    <property type="entry name" value="Postsynaptic density"/>
</dbReference>
<dbReference type="ChiTaRS" id="Tmem30a">
    <property type="organism name" value="mouse"/>
</dbReference>
<dbReference type="PRO" id="PR:Q8VEK0"/>
<dbReference type="Proteomes" id="UP000000589">
    <property type="component" value="Chromosome 9"/>
</dbReference>
<dbReference type="RNAct" id="Q8VEK0">
    <property type="molecule type" value="protein"/>
</dbReference>
<dbReference type="Bgee" id="ENSMUSG00000032328">
    <property type="expression patterns" value="Expressed in ventromedial nucleus of hypothalamus and 259 other cell types or tissues"/>
</dbReference>
<dbReference type="ExpressionAtlas" id="Q8VEK0">
    <property type="expression patterns" value="baseline and differential"/>
</dbReference>
<dbReference type="GO" id="GO:0016324">
    <property type="term" value="C:apical plasma membrane"/>
    <property type="evidence" value="ECO:0007669"/>
    <property type="project" value="UniProtKB-SubCell"/>
</dbReference>
<dbReference type="GO" id="GO:0031901">
    <property type="term" value="C:early endosome membrane"/>
    <property type="evidence" value="ECO:0007669"/>
    <property type="project" value="Ensembl"/>
</dbReference>
<dbReference type="GO" id="GO:0005783">
    <property type="term" value="C:endoplasmic reticulum"/>
    <property type="evidence" value="ECO:0007669"/>
    <property type="project" value="Ensembl"/>
</dbReference>
<dbReference type="GO" id="GO:0005794">
    <property type="term" value="C:Golgi apparatus"/>
    <property type="evidence" value="ECO:0007669"/>
    <property type="project" value="UniProtKB-SubCell"/>
</dbReference>
<dbReference type="GO" id="GO:0031902">
    <property type="term" value="C:late endosome membrane"/>
    <property type="evidence" value="ECO:0007669"/>
    <property type="project" value="Ensembl"/>
</dbReference>
<dbReference type="GO" id="GO:1990531">
    <property type="term" value="C:phospholipid-translocating ATPase complex"/>
    <property type="evidence" value="ECO:0000250"/>
    <property type="project" value="UniProtKB"/>
</dbReference>
<dbReference type="GO" id="GO:0030658">
    <property type="term" value="C:transport vesicle membrane"/>
    <property type="evidence" value="ECO:0007669"/>
    <property type="project" value="UniProtKB-SubCell"/>
</dbReference>
<dbReference type="GO" id="GO:0015247">
    <property type="term" value="F:aminophospholipid flippase activity"/>
    <property type="evidence" value="ECO:0007669"/>
    <property type="project" value="Ensembl"/>
</dbReference>
<dbReference type="GO" id="GO:0005198">
    <property type="term" value="F:structural molecule activity"/>
    <property type="evidence" value="ECO:0007669"/>
    <property type="project" value="Ensembl"/>
</dbReference>
<dbReference type="GO" id="GO:0045332">
    <property type="term" value="P:phospholipid translocation"/>
    <property type="evidence" value="ECO:0000315"/>
    <property type="project" value="MGI"/>
</dbReference>
<dbReference type="GO" id="GO:0010976">
    <property type="term" value="P:positive regulation of neuron projection development"/>
    <property type="evidence" value="ECO:0000314"/>
    <property type="project" value="UniProtKB"/>
</dbReference>
<dbReference type="GO" id="GO:0061092">
    <property type="term" value="P:positive regulation of phospholipid translocation"/>
    <property type="evidence" value="ECO:0007669"/>
    <property type="project" value="Ensembl"/>
</dbReference>
<dbReference type="GO" id="GO:0070863">
    <property type="term" value="P:positive regulation of protein exit from endoplasmic reticulum"/>
    <property type="evidence" value="ECO:0007669"/>
    <property type="project" value="Ensembl"/>
</dbReference>
<dbReference type="GO" id="GO:0036010">
    <property type="term" value="P:protein localization to endosome"/>
    <property type="evidence" value="ECO:0007669"/>
    <property type="project" value="Ensembl"/>
</dbReference>
<dbReference type="GO" id="GO:0006855">
    <property type="term" value="P:xenobiotic transmembrane transport"/>
    <property type="evidence" value="ECO:0007669"/>
    <property type="project" value="Ensembl"/>
</dbReference>
<dbReference type="InterPro" id="IPR005045">
    <property type="entry name" value="CDC50/LEM3_fam"/>
</dbReference>
<dbReference type="PANTHER" id="PTHR10926">
    <property type="entry name" value="CELL CYCLE CONTROL PROTEIN 50"/>
    <property type="match status" value="1"/>
</dbReference>
<dbReference type="PANTHER" id="PTHR10926:SF17">
    <property type="entry name" value="CELL CYCLE CONTROL PROTEIN 50A"/>
    <property type="match status" value="1"/>
</dbReference>
<dbReference type="Pfam" id="PF03381">
    <property type="entry name" value="CDC50"/>
    <property type="match status" value="1"/>
</dbReference>
<dbReference type="PIRSF" id="PIRSF015840">
    <property type="entry name" value="DUF284_TM_euk"/>
    <property type="match status" value="1"/>
</dbReference>
<reference key="1">
    <citation type="journal article" date="2005" name="Science">
        <title>The transcriptional landscape of the mammalian genome.</title>
        <authorList>
            <person name="Carninci P."/>
            <person name="Kasukawa T."/>
            <person name="Katayama S."/>
            <person name="Gough J."/>
            <person name="Frith M.C."/>
            <person name="Maeda N."/>
            <person name="Oyama R."/>
            <person name="Ravasi T."/>
            <person name="Lenhard B."/>
            <person name="Wells C."/>
            <person name="Kodzius R."/>
            <person name="Shimokawa K."/>
            <person name="Bajic V.B."/>
            <person name="Brenner S.E."/>
            <person name="Batalov S."/>
            <person name="Forrest A.R."/>
            <person name="Zavolan M."/>
            <person name="Davis M.J."/>
            <person name="Wilming L.G."/>
            <person name="Aidinis V."/>
            <person name="Allen J.E."/>
            <person name="Ambesi-Impiombato A."/>
            <person name="Apweiler R."/>
            <person name="Aturaliya R.N."/>
            <person name="Bailey T.L."/>
            <person name="Bansal M."/>
            <person name="Baxter L."/>
            <person name="Beisel K.W."/>
            <person name="Bersano T."/>
            <person name="Bono H."/>
            <person name="Chalk A.M."/>
            <person name="Chiu K.P."/>
            <person name="Choudhary V."/>
            <person name="Christoffels A."/>
            <person name="Clutterbuck D.R."/>
            <person name="Crowe M.L."/>
            <person name="Dalla E."/>
            <person name="Dalrymple B.P."/>
            <person name="de Bono B."/>
            <person name="Della Gatta G."/>
            <person name="di Bernardo D."/>
            <person name="Down T."/>
            <person name="Engstrom P."/>
            <person name="Fagiolini M."/>
            <person name="Faulkner G."/>
            <person name="Fletcher C.F."/>
            <person name="Fukushima T."/>
            <person name="Furuno M."/>
            <person name="Futaki S."/>
            <person name="Gariboldi M."/>
            <person name="Georgii-Hemming P."/>
            <person name="Gingeras T.R."/>
            <person name="Gojobori T."/>
            <person name="Green R.E."/>
            <person name="Gustincich S."/>
            <person name="Harbers M."/>
            <person name="Hayashi Y."/>
            <person name="Hensch T.K."/>
            <person name="Hirokawa N."/>
            <person name="Hill D."/>
            <person name="Huminiecki L."/>
            <person name="Iacono M."/>
            <person name="Ikeo K."/>
            <person name="Iwama A."/>
            <person name="Ishikawa T."/>
            <person name="Jakt M."/>
            <person name="Kanapin A."/>
            <person name="Katoh M."/>
            <person name="Kawasawa Y."/>
            <person name="Kelso J."/>
            <person name="Kitamura H."/>
            <person name="Kitano H."/>
            <person name="Kollias G."/>
            <person name="Krishnan S.P."/>
            <person name="Kruger A."/>
            <person name="Kummerfeld S.K."/>
            <person name="Kurochkin I.V."/>
            <person name="Lareau L.F."/>
            <person name="Lazarevic D."/>
            <person name="Lipovich L."/>
            <person name="Liu J."/>
            <person name="Liuni S."/>
            <person name="McWilliam S."/>
            <person name="Madan Babu M."/>
            <person name="Madera M."/>
            <person name="Marchionni L."/>
            <person name="Matsuda H."/>
            <person name="Matsuzawa S."/>
            <person name="Miki H."/>
            <person name="Mignone F."/>
            <person name="Miyake S."/>
            <person name="Morris K."/>
            <person name="Mottagui-Tabar S."/>
            <person name="Mulder N."/>
            <person name="Nakano N."/>
            <person name="Nakauchi H."/>
            <person name="Ng P."/>
            <person name="Nilsson R."/>
            <person name="Nishiguchi S."/>
            <person name="Nishikawa S."/>
            <person name="Nori F."/>
            <person name="Ohara O."/>
            <person name="Okazaki Y."/>
            <person name="Orlando V."/>
            <person name="Pang K.C."/>
            <person name="Pavan W.J."/>
            <person name="Pavesi G."/>
            <person name="Pesole G."/>
            <person name="Petrovsky N."/>
            <person name="Piazza S."/>
            <person name="Reed J."/>
            <person name="Reid J.F."/>
            <person name="Ring B.Z."/>
            <person name="Ringwald M."/>
            <person name="Rost B."/>
            <person name="Ruan Y."/>
            <person name="Salzberg S.L."/>
            <person name="Sandelin A."/>
            <person name="Schneider C."/>
            <person name="Schoenbach C."/>
            <person name="Sekiguchi K."/>
            <person name="Semple C.A."/>
            <person name="Seno S."/>
            <person name="Sessa L."/>
            <person name="Sheng Y."/>
            <person name="Shibata Y."/>
            <person name="Shimada H."/>
            <person name="Shimada K."/>
            <person name="Silva D."/>
            <person name="Sinclair B."/>
            <person name="Sperling S."/>
            <person name="Stupka E."/>
            <person name="Sugiura K."/>
            <person name="Sultana R."/>
            <person name="Takenaka Y."/>
            <person name="Taki K."/>
            <person name="Tammoja K."/>
            <person name="Tan S.L."/>
            <person name="Tang S."/>
            <person name="Taylor M.S."/>
            <person name="Tegner J."/>
            <person name="Teichmann S.A."/>
            <person name="Ueda H.R."/>
            <person name="van Nimwegen E."/>
            <person name="Verardo R."/>
            <person name="Wei C.L."/>
            <person name="Yagi K."/>
            <person name="Yamanishi H."/>
            <person name="Zabarovsky E."/>
            <person name="Zhu S."/>
            <person name="Zimmer A."/>
            <person name="Hide W."/>
            <person name="Bult C."/>
            <person name="Grimmond S.M."/>
            <person name="Teasdale R.D."/>
            <person name="Liu E.T."/>
            <person name="Brusic V."/>
            <person name="Quackenbush J."/>
            <person name="Wahlestedt C."/>
            <person name="Mattick J.S."/>
            <person name="Hume D.A."/>
            <person name="Kai C."/>
            <person name="Sasaki D."/>
            <person name="Tomaru Y."/>
            <person name="Fukuda S."/>
            <person name="Kanamori-Katayama M."/>
            <person name="Suzuki M."/>
            <person name="Aoki J."/>
            <person name="Arakawa T."/>
            <person name="Iida J."/>
            <person name="Imamura K."/>
            <person name="Itoh M."/>
            <person name="Kato T."/>
            <person name="Kawaji H."/>
            <person name="Kawagashira N."/>
            <person name="Kawashima T."/>
            <person name="Kojima M."/>
            <person name="Kondo S."/>
            <person name="Konno H."/>
            <person name="Nakano K."/>
            <person name="Ninomiya N."/>
            <person name="Nishio T."/>
            <person name="Okada M."/>
            <person name="Plessy C."/>
            <person name="Shibata K."/>
            <person name="Shiraki T."/>
            <person name="Suzuki S."/>
            <person name="Tagami M."/>
            <person name="Waki K."/>
            <person name="Watahiki A."/>
            <person name="Okamura-Oho Y."/>
            <person name="Suzuki H."/>
            <person name="Kawai J."/>
            <person name="Hayashizaki Y."/>
        </authorList>
    </citation>
    <scope>NUCLEOTIDE SEQUENCE [LARGE SCALE MRNA]</scope>
    <source>
        <strain>C57BL/6J</strain>
        <strain>NOD</strain>
        <tissue>Bone marrow</tissue>
        <tissue>Testis</tissue>
    </source>
</reference>
<reference key="2">
    <citation type="journal article" date="2004" name="Genome Res.">
        <title>The status, quality, and expansion of the NIH full-length cDNA project: the Mammalian Gene Collection (MGC).</title>
        <authorList>
            <consortium name="The MGC Project Team"/>
        </authorList>
    </citation>
    <scope>NUCLEOTIDE SEQUENCE [LARGE SCALE MRNA]</scope>
    <source>
        <strain>FVB/N</strain>
        <tissue>Mammary gland</tissue>
        <tissue>Mammary tumor</tissue>
    </source>
</reference>
<reference key="3">
    <citation type="journal article" date="2007" name="Proc. Natl. Acad. Sci. U.S.A.">
        <title>Large-scale phosphorylation analysis of mouse liver.</title>
        <authorList>
            <person name="Villen J."/>
            <person name="Beausoleil S.A."/>
            <person name="Gerber S.A."/>
            <person name="Gygi S.P."/>
        </authorList>
    </citation>
    <scope>ACETYLATION [LARGE SCALE ANALYSIS] AT ALA-2</scope>
    <scope>CLEAVAGE OF INITIATOR METHIONINE [LARGE SCALE ANALYSIS]</scope>
    <scope>IDENTIFICATION BY MASS SPECTROMETRY [LARGE SCALE ANALYSIS]</scope>
    <source>
        <tissue>Liver</tissue>
    </source>
</reference>
<reference key="4">
    <citation type="journal article" date="2010" name="Cell">
        <title>A tissue-specific atlas of mouse protein phosphorylation and expression.</title>
        <authorList>
            <person name="Huttlin E.L."/>
            <person name="Jedrychowski M.P."/>
            <person name="Elias J.E."/>
            <person name="Goswami T."/>
            <person name="Rad R."/>
            <person name="Beausoleil S.A."/>
            <person name="Villen J."/>
            <person name="Haas W."/>
            <person name="Sowa M.E."/>
            <person name="Gygi S.P."/>
        </authorList>
    </citation>
    <scope>IDENTIFICATION BY MASS SPECTROMETRY [LARGE SCALE ANALYSIS]</scope>
    <source>
        <tissue>Brain</tissue>
        <tissue>Brown adipose tissue</tissue>
        <tissue>Heart</tissue>
        <tissue>Kidney</tissue>
        <tissue>Liver</tissue>
        <tissue>Lung</tissue>
        <tissue>Spleen</tissue>
        <tissue>Testis</tissue>
    </source>
</reference>
<reference key="5">
    <citation type="journal article" date="2012" name="FEBS Lett.">
        <title>P4-ATPase ATP8A2 acts in synergy with CDC50A to enhance neurite outgrowth.</title>
        <authorList>
            <person name="Xu Q."/>
            <person name="Yang G.Y."/>
            <person name="Liu N."/>
            <person name="Xu P."/>
            <person name="Chen Y.L."/>
            <person name="Zhou Z."/>
            <person name="Luo Z.G."/>
            <person name="Ding X."/>
        </authorList>
    </citation>
    <scope>FUNCTION</scope>
</reference>
<reference key="6">
    <citation type="journal article" date="2012" name="J. Histochem. Cytochem.">
        <title>Cellular localization and biochemical analysis of mammalian CDC50A, a glycosylated beta-subunit for P4 ATPases.</title>
        <authorList>
            <person name="Folmer D.E."/>
            <person name="Mok K.S."/>
            <person name="de Wee S.W."/>
            <person name="Duijst S."/>
            <person name="Hiralall J.K."/>
            <person name="Seppen J."/>
            <person name="Oude Elferink R.P."/>
            <person name="Paulusma C.C."/>
        </authorList>
    </citation>
    <scope>GLYCOSYLATION</scope>
    <scope>SUBCELLULAR LOCATION</scope>
    <scope>TISSUE SPECIFICITY</scope>
</reference>
<reference key="7">
    <citation type="journal article" date="2012" name="Proc. Natl. Acad. Sci. U.S.A.">
        <title>Critical role of a transmembrane lysine in aminophospholipid transport by mammalian photoreceptor P4-ATPase ATP8A2.</title>
        <authorList>
            <person name="Coleman J.A."/>
            <person name="Vestergaard A.L."/>
            <person name="Molday R.S."/>
            <person name="Vilsen B."/>
            <person name="Andersen J.P."/>
        </authorList>
    </citation>
    <scope>TISSUE SPECIFICITY</scope>
</reference>
<reference key="8">
    <citation type="journal article" date="2013" name="J. Biol. Chem.">
        <title>Role for phospholipid flippase complex of ATP8A1 and CDC50A proteins in cell migration.</title>
        <authorList>
            <person name="Kato U."/>
            <person name="Inadome H."/>
            <person name="Yamamoto M."/>
            <person name="Emoto K."/>
            <person name="Kobayashi T."/>
            <person name="Umeda M."/>
        </authorList>
    </citation>
    <scope>FUNCTION</scope>
    <scope>INTERACTION WITH ATP8A1</scope>
</reference>
<reference key="9">
    <citation type="journal article" date="2014" name="J. Cell Sci.">
        <title>Phospholipid flippase ATP8A2 is required for normal visual and auditory function and photoreceptor and spiral ganglion cell survival.</title>
        <authorList>
            <person name="Coleman J.A."/>
            <person name="Zhu X."/>
            <person name="Djajadi H.R."/>
            <person name="Molday L.L."/>
            <person name="Smith R.S."/>
            <person name="Libby R.T."/>
            <person name="John S.W."/>
            <person name="Molday R.S."/>
        </authorList>
    </citation>
    <scope>TISSUE SPECIFICITY</scope>
</reference>
<reference key="10">
    <citation type="journal article" date="2018" name="Nat. Commun.">
        <title>Cell surface flip-flop of phosphatidylserine is critical for PIEZO1-mediated myotube formation.</title>
        <authorList>
            <person name="Tsuchiya M."/>
            <person name="Hara Y."/>
            <person name="Okuda M."/>
            <person name="Itoh K."/>
            <person name="Nishioka R."/>
            <person name="Shiomi A."/>
            <person name="Nagao K."/>
            <person name="Mori M."/>
            <person name="Mori Y."/>
            <person name="Ikenouchi J."/>
            <person name="Suzuki R."/>
            <person name="Tanaka M."/>
            <person name="Ohwada T."/>
            <person name="Aoki J."/>
            <person name="Kanagawa M."/>
            <person name="Toda T."/>
            <person name="Nagata Y."/>
            <person name="Matsuda R."/>
            <person name="Takayama Y."/>
            <person name="Tominaga M."/>
            <person name="Umeda M."/>
        </authorList>
    </citation>
    <scope>FUNCTION</scope>
    <scope>INTERACTION WITH ATP11A</scope>
</reference>
<reference key="11">
    <citation type="journal article" date="2018" name="Sci. Rep.">
        <title>Proteomic Analysis and Functional Characterization of P4-ATPase Phospholipid Flippases from Murine Tissues.</title>
        <authorList>
            <person name="Wang J."/>
            <person name="Molday L.L."/>
            <person name="Hii T."/>
            <person name="Coleman J.A."/>
            <person name="Wen T."/>
            <person name="Andersen J.P."/>
            <person name="Molday R.S."/>
        </authorList>
    </citation>
    <scope>FUNCTION</scope>
    <scope>IDENTIFICATION BY MASS SPECTROMETRY</scope>
    <scope>SUBUNIT</scope>
    <scope>TISSUE SPECIFICITY</scope>
</reference>
<organism>
    <name type="scientific">Mus musculus</name>
    <name type="common">Mouse</name>
    <dbReference type="NCBI Taxonomy" id="10090"/>
    <lineage>
        <taxon>Eukaryota</taxon>
        <taxon>Metazoa</taxon>
        <taxon>Chordata</taxon>
        <taxon>Craniata</taxon>
        <taxon>Vertebrata</taxon>
        <taxon>Euteleostomi</taxon>
        <taxon>Mammalia</taxon>
        <taxon>Eutheria</taxon>
        <taxon>Euarchontoglires</taxon>
        <taxon>Glires</taxon>
        <taxon>Rodentia</taxon>
        <taxon>Myomorpha</taxon>
        <taxon>Muroidea</taxon>
        <taxon>Muridae</taxon>
        <taxon>Murinae</taxon>
        <taxon>Mus</taxon>
        <taxon>Mus</taxon>
    </lineage>
</organism>
<sequence length="364" mass="41061">MAMNYSAKDEVDGGPAGPPGGAAKTRRPDNTAFKQQRLPAWQPILTAGTVLPTFFIIGLIFIPIGIGIFVTSNNIREIEIDYTGTEPSSPCNKCLSPNVTSCACTINFTLKQSFEGNVFMYYGLSNFYQNHRRYVKSRDDSQLNGDPSALLNPSKECEPYRRNEDRPIAPCGAIANSMFNDTLELYLVANESDPKPIPIPLKKKGIAWWTDKNVKFRNPPGKESLEEKFKDTIKPVNWHKAVYELDPEDESNNGFINEDFIVWMRTAALPTFRKLYRLIERRDDLHPTLPAGQYFLNITYNYPVHSFDGRKRMILSTISWMGGKNPFLGIAYITIGSISFLLGVVLLVINHKYRNSSNTADITI</sequence>
<keyword id="KW-0007">Acetylation</keyword>
<keyword id="KW-1003">Cell membrane</keyword>
<keyword id="KW-0968">Cytoplasmic vesicle</keyword>
<keyword id="KW-1015">Disulfide bond</keyword>
<keyword id="KW-0325">Glycoprotein</keyword>
<keyword id="KW-0333">Golgi apparatus</keyword>
<keyword id="KW-0445">Lipid transport</keyword>
<keyword id="KW-0472">Membrane</keyword>
<keyword id="KW-1185">Reference proteome</keyword>
<keyword id="KW-0812">Transmembrane</keyword>
<keyword id="KW-1133">Transmembrane helix</keyword>
<keyword id="KW-0813">Transport</keyword>
<comment type="function">
    <text evidence="7 8 10 11">Accessory component of a P4-ATPase flippase complex which catalyzes the hydrolysis of ATP coupled to the transport of aminophospholipids from the outer to the inner leaflet of various membranes and ensures the maintenance of asymmetric distribution of phospholipids. Phospholipid translocation also seems to be implicated in vesicle formation and in uptake of lipid signaling molecules. The beta subunit may assist in binding of the phospholipid substrate. Required for the proper folding, assembly and ER to Golgi exit of the ATP8A2:TMEM30A flippase complex. ATP8A2:TMEM30A may be involved in regulation of neurite outgrowth, and, reconstituted to liposomes, predomiminantly transports phosphatidylserine (PS) and to a lesser extent phosphatidylethanolamine (PE). The ATP8A1:TMEM30A flippase complex seems to play a role in regulation of cell migration probably involving flippase-mediated translocation of phosphatidylethanolamine (PE) at the plasma membrane. Required for the formation of the ATP8A2, ATP8B1 and ATP8B2 P-type ATPAse intermediate phosphoenzymes. Involved in uptake of platelet-activating factor (PAF). Can also mediate the export of alpha subunits ATP8A1, ATP8B1, ATP8B2, ATP8B4, ATP10A, ATP10B, ATP10D, ATP11A, ATP11B and ATP11C from the ER to other membrane localizations.</text>
</comment>
<comment type="subunit">
    <text evidence="2 8">Component of various P4-ATPase flippase complexes which consists of a catalytic alpha subunit and an accessory beta subunit. Interacts with ATP8A1 to form a flippase complex; this complex forms an intermediate phosphoenzyme. The ATP8A2:TMEM30A flippase complex has been purified, and ATP8B1:TMEM30A and ATP8B2:TMEM30A flippase complexes have been shown to form intermediate phosphoenzymes in vitro (By similarity). Interacts with alpha subunits ATP8A1, ATP8B1, ATP8B2, ATP8B4, ATP10A, ATP10B, ATP10D, ATP11A, ATP11B and ATP11C (PubMed:23269685, PubMed:29799007, PubMed:30018401).</text>
</comment>
<comment type="interaction">
    <interactant intactId="EBI-8381028">
        <id>Q8VEK0</id>
    </interactant>
    <interactant intactId="EBI-20828407">
        <id>P70704</id>
        <label>Atp8a1</label>
    </interactant>
    <organismsDiffer>false</organismsDiffer>
    <experiments>2</experiments>
</comment>
<comment type="interaction">
    <interactant intactId="EBI-8381028">
        <id>Q8VEK0</id>
    </interactant>
    <interactant intactId="EBI-302641">
        <id>P05067-4</id>
        <label>APP</label>
    </interactant>
    <organismsDiffer>true</organismsDiffer>
    <experiments>6</experiments>
</comment>
<comment type="interaction">
    <interactant intactId="EBI-8381028">
        <id>Q8VEK0</id>
    </interactant>
    <interactant intactId="EBI-3894543">
        <id>PRO_0000000091</id>
        <label>APP</label>
        <dbReference type="UniProtKB" id="P05067"/>
    </interactant>
    <organismsDiffer>true</organismsDiffer>
    <experiments>3</experiments>
</comment>
<comment type="subcellular location">
    <subcellularLocation>
        <location evidence="5">Membrane</location>
        <topology evidence="5">Multi-pass membrane protein</topology>
    </subcellularLocation>
    <subcellularLocation>
        <location evidence="1">Cell membrane</location>
    </subcellularLocation>
    <subcellularLocation>
        <location evidence="5">Golgi apparatus</location>
    </subcellularLocation>
    <subcellularLocation>
        <location evidence="5">Cytoplasmic vesicle</location>
        <location evidence="5">Secretory vesicle membrane</location>
    </subcellularLocation>
    <subcellularLocation>
        <location evidence="5">Apical cell membrane</location>
    </subcellularLocation>
</comment>
<comment type="tissue specificity">
    <text evidence="5 6 9 11">Expressed in photoreceptor cells; detected in retina outer segment (at protein level). Detected in hepatocytes liver sinusoidal endothelial cells and kidney brush border of the proximal tubules (at protein level). Expressed in brain (at protein level).</text>
</comment>
<comment type="domain">
    <text evidence="1">The N-terminal domain seems to play a role in the reaction cycle of thr catalytic subunit such as ATP8A2.</text>
</comment>
<comment type="PTM">
    <text evidence="5">N-glycosylated. Contains high mannose-type oligosaccharides.</text>
</comment>
<comment type="similarity">
    <text evidence="12">Belongs to the CDC50/LEM3 family.</text>
</comment>
<comment type="sequence caution" evidence="12">
    <conflict type="erroneous initiation">
        <sequence resource="EMBL-CDS" id="AAH26136"/>
    </conflict>
</comment>
<comment type="sequence caution" evidence="12">
    <conflict type="frameshift">
        <sequence resource="EMBL-CDS" id="BAE41961"/>
    </conflict>
</comment>
<gene>
    <name evidence="13" type="primary">Tmem30a</name>
    <name type="synonym">Cdc50a</name>
    <name type="synonym">D9Wsu20e</name>
</gene>
<name>CC50A_MOUSE</name>
<feature type="initiator methionine" description="Removed" evidence="14">
    <location>
        <position position="1"/>
    </location>
</feature>
<feature type="chain" id="PRO_0000244470" description="Cell cycle control protein 50A">
    <location>
        <begin position="2"/>
        <end position="364"/>
    </location>
</feature>
<feature type="topological domain" description="Cytoplasmic" evidence="3">
    <location>
        <begin position="2"/>
        <end position="49"/>
    </location>
</feature>
<feature type="transmembrane region" description="Helical" evidence="3">
    <location>
        <begin position="50"/>
        <end position="70"/>
    </location>
</feature>
<feature type="topological domain" description="Exoplasmic loop" evidence="3">
    <location>
        <begin position="71"/>
        <end position="328"/>
    </location>
</feature>
<feature type="transmembrane region" description="Helical" evidence="3">
    <location>
        <begin position="329"/>
        <end position="349"/>
    </location>
</feature>
<feature type="topological domain" description="Cytoplasmic" evidence="3">
    <location>
        <begin position="350"/>
        <end position="364"/>
    </location>
</feature>
<feature type="region of interest" description="Disordered" evidence="4">
    <location>
        <begin position="1"/>
        <end position="28"/>
    </location>
</feature>
<feature type="modified residue" description="N-acetylalanine" evidence="14">
    <location>
        <position position="2"/>
    </location>
</feature>
<feature type="glycosylation site" description="N-linked (GlcNAc...) asparagine" evidence="3">
    <location>
        <position position="98"/>
    </location>
</feature>
<feature type="glycosylation site" description="N-linked (GlcNAc...) asparagine" evidence="3">
    <location>
        <position position="297"/>
    </location>
</feature>
<feature type="disulfide bond" evidence="2">
    <location>
        <begin position="91"/>
        <end position="104"/>
    </location>
</feature>
<feature type="disulfide bond" evidence="2">
    <location>
        <begin position="94"/>
        <end position="102"/>
    </location>
</feature>
<feature type="disulfide bond" evidence="2">
    <location>
        <begin position="157"/>
        <end position="171"/>
    </location>
</feature>
<feature type="sequence conflict" description="In Ref. 1; BAE29283." evidence="12" ref="1">
    <original>P</original>
    <variation>H</variation>
    <location>
        <position position="90"/>
    </location>
</feature>
<feature type="sequence conflict" description="In Ref. 2; AAH18491." evidence="12" ref="2">
    <original>P</original>
    <variation>L</variation>
    <location>
        <position position="198"/>
    </location>
</feature>
<proteinExistence type="evidence at protein level"/>
<accession>Q8VEK0</accession>
<accession>Q3TCJ5</accession>
<accession>Q3UDH8</accession>
<accession>Q8R0X6</accession>
<accession>Q8VEH1</accession>